<organism>
    <name type="scientific">Oryza sativa subsp. japonica</name>
    <name type="common">Rice</name>
    <dbReference type="NCBI Taxonomy" id="39947"/>
    <lineage>
        <taxon>Eukaryota</taxon>
        <taxon>Viridiplantae</taxon>
        <taxon>Streptophyta</taxon>
        <taxon>Embryophyta</taxon>
        <taxon>Tracheophyta</taxon>
        <taxon>Spermatophyta</taxon>
        <taxon>Magnoliopsida</taxon>
        <taxon>Liliopsida</taxon>
        <taxon>Poales</taxon>
        <taxon>Poaceae</taxon>
        <taxon>BOP clade</taxon>
        <taxon>Oryzoideae</taxon>
        <taxon>Oryzeae</taxon>
        <taxon>Oryzinae</taxon>
        <taxon>Oryza</taxon>
        <taxon>Oryza sativa</taxon>
    </lineage>
</organism>
<evidence type="ECO:0000250" key="1">
    <source>
        <dbReference type="UniProtKB" id="Q69KN0"/>
    </source>
</evidence>
<evidence type="ECO:0000255" key="2"/>
<evidence type="ECO:0000256" key="3">
    <source>
        <dbReference type="SAM" id="MobiDB-lite"/>
    </source>
</evidence>
<evidence type="ECO:0000269" key="4">
    <source>
    </source>
</evidence>
<evidence type="ECO:0000269" key="5">
    <source>
    </source>
</evidence>
<evidence type="ECO:0000303" key="6">
    <source>
    </source>
</evidence>
<evidence type="ECO:0000305" key="7"/>
<evidence type="ECO:0000312" key="8">
    <source>
        <dbReference type="EMBL" id="BAS87849.1"/>
    </source>
</evidence>
<evidence type="ECO:0000312" key="9">
    <source>
        <dbReference type="EMBL" id="CAE01874.2"/>
    </source>
</evidence>
<evidence type="ECO:0000312" key="10">
    <source>
        <dbReference type="EMBL" id="EEE60482.1"/>
    </source>
</evidence>
<accession>Q0JF48</accession>
<accession>Q6VY02</accession>
<accession>Q7XSN0</accession>
<sequence length="624" mass="71547">MPGLPLTDHDAVNTGCEFDCQRSSDQMCCEHSVAQFSSDQQLNPEENLALYCKPLELYNFIRHRAIENPPYLQRCLLYKIRAKQKKRIQITISLPGSNNKELQAQNIFPLYVLFARPTSNVPIEGHSPIYRFSQARLLTSFNDSGNNDRAEATFVIPDLETLIATQAYGLTFILVSRGTKKNKGRTGQNLCENDCSEKHVDYSSLRKLAGKCFWGKIPITLLNSSLETCADLILGHIVESPISICMSPGYLEPTFLEHDNCLSFCSRKADAMVPYQLQVKVSAAEAGAKDILKSPYNSFSYSDVPPSLLLRIVRLRVGNVLFNYKNTQMSEVTEDFTCPFCLVRCGNFKGLECHMTSSHDLFHYEFWISEDYQAVNVTLKKDNMRTEFVAAEVDNSHRIFYYRSRFKKSRTEILPVARADAHIMESGSPEETQAESEDDVQEENENALIDDSKKLHGSNHSQSEFLAFGKSRKLSANRADPRNRLLLQKRQFIHSHKAQPMTFEEVLSDNDSEDEVDDDIADLEDRRMLDDFVDVTKDEKRIMHMWNSFIRKQSILADSHVPWACEAFSRHHGEELLENSALLWGWRMFMIKLWNHSLLSARTMDTCNRILDDIKNERSDPKKQ</sequence>
<dbReference type="EMBL" id="AY321106">
    <property type="protein sequence ID" value="AAQ84239.1"/>
    <property type="molecule type" value="mRNA"/>
</dbReference>
<dbReference type="EMBL" id="AL606654">
    <property type="protein sequence ID" value="CAE01874.2"/>
    <property type="status" value="ALT_SEQ"/>
    <property type="molecule type" value="Genomic_DNA"/>
</dbReference>
<dbReference type="EMBL" id="AP008210">
    <property type="protein sequence ID" value="BAF14039.1"/>
    <property type="molecule type" value="Genomic_DNA"/>
</dbReference>
<dbReference type="EMBL" id="AP014960">
    <property type="protein sequence ID" value="BAS87849.1"/>
    <property type="molecule type" value="Genomic_DNA"/>
</dbReference>
<dbReference type="EMBL" id="CM000141">
    <property type="protein sequence ID" value="EEE60482.1"/>
    <property type="status" value="ALT_SEQ"/>
    <property type="molecule type" value="Genomic_DNA"/>
</dbReference>
<dbReference type="RefSeq" id="XP_015636446.1">
    <property type="nucleotide sequence ID" value="XM_015780960.1"/>
</dbReference>
<dbReference type="RefSeq" id="XP_015636447.1">
    <property type="nucleotide sequence ID" value="XM_015780961.1"/>
</dbReference>
<dbReference type="RefSeq" id="XP_015636449.1">
    <property type="nucleotide sequence ID" value="XM_015780963.1"/>
</dbReference>
<dbReference type="RefSeq" id="XP_015636451.1">
    <property type="nucleotide sequence ID" value="XM_015780965.1"/>
</dbReference>
<dbReference type="FunCoup" id="Q0JF48">
    <property type="interactions" value="801"/>
</dbReference>
<dbReference type="STRING" id="39947.Q0JF48"/>
<dbReference type="PaxDb" id="39947-Q0JF48"/>
<dbReference type="EnsemblPlants" id="Os04t0162100-01">
    <property type="protein sequence ID" value="Os04t0162100-01"/>
    <property type="gene ID" value="Os04g0162100"/>
</dbReference>
<dbReference type="Gramene" id="Os04t0162100-01">
    <property type="protein sequence ID" value="Os04t0162100-01"/>
    <property type="gene ID" value="Os04g0162100"/>
</dbReference>
<dbReference type="KEGG" id="dosa:Os04g0162100"/>
<dbReference type="KEGG" id="osa:4335036"/>
<dbReference type="eggNOG" id="KOG2350">
    <property type="taxonomic scope" value="Eukaryota"/>
</dbReference>
<dbReference type="HOGENOM" id="CLU_022782_1_0_1"/>
<dbReference type="InParanoid" id="Q0JF48"/>
<dbReference type="OMA" id="QRHAIKK"/>
<dbReference type="OrthoDB" id="166746at2759"/>
<dbReference type="Proteomes" id="UP000000763">
    <property type="component" value="Chromosome 4"/>
</dbReference>
<dbReference type="Proteomes" id="UP000007752">
    <property type="component" value="Chromosome 4"/>
</dbReference>
<dbReference type="Proteomes" id="UP000059680">
    <property type="component" value="Chromosome 4"/>
</dbReference>
<dbReference type="ExpressionAtlas" id="Q0JF48">
    <property type="expression patterns" value="baseline and differential"/>
</dbReference>
<dbReference type="GO" id="GO:0005634">
    <property type="term" value="C:nucleus"/>
    <property type="evidence" value="ECO:0000318"/>
    <property type="project" value="GO_Central"/>
</dbReference>
<dbReference type="GO" id="GO:0031490">
    <property type="term" value="F:chromatin DNA binding"/>
    <property type="evidence" value="ECO:0000318"/>
    <property type="project" value="GO_Central"/>
</dbReference>
<dbReference type="GO" id="GO:0008270">
    <property type="term" value="F:zinc ion binding"/>
    <property type="evidence" value="ECO:0007669"/>
    <property type="project" value="UniProtKB-KW"/>
</dbReference>
<dbReference type="GO" id="GO:0030154">
    <property type="term" value="P:cell differentiation"/>
    <property type="evidence" value="ECO:0007669"/>
    <property type="project" value="UniProtKB-KW"/>
</dbReference>
<dbReference type="GO" id="GO:0006325">
    <property type="term" value="P:chromatin organization"/>
    <property type="evidence" value="ECO:0007669"/>
    <property type="project" value="UniProtKB-KW"/>
</dbReference>
<dbReference type="CDD" id="cd21553">
    <property type="entry name" value="VEFS-box_EMF2-like"/>
    <property type="match status" value="1"/>
</dbReference>
<dbReference type="CDD" id="cd21749">
    <property type="entry name" value="ZnB-Zn_EMF2-like"/>
    <property type="match status" value="1"/>
</dbReference>
<dbReference type="InterPro" id="IPR056068">
    <property type="entry name" value="EMF2-like_DUF7651"/>
</dbReference>
<dbReference type="InterPro" id="IPR019135">
    <property type="entry name" value="Polycomb_protein_VEFS-Box"/>
</dbReference>
<dbReference type="PANTHER" id="PTHR22597">
    <property type="entry name" value="POLYCOMB GROUP PROTEIN"/>
    <property type="match status" value="1"/>
</dbReference>
<dbReference type="PANTHER" id="PTHR22597:SF0">
    <property type="entry name" value="POLYCOMB PROTEIN SUZ12"/>
    <property type="match status" value="1"/>
</dbReference>
<dbReference type="Pfam" id="PF24663">
    <property type="entry name" value="DUF7651"/>
    <property type="match status" value="1"/>
</dbReference>
<dbReference type="Pfam" id="PF09733">
    <property type="entry name" value="VEFS-Box"/>
    <property type="match status" value="1"/>
</dbReference>
<dbReference type="Pfam" id="PF23320">
    <property type="entry name" value="Zn_SUZ12"/>
    <property type="match status" value="1"/>
</dbReference>
<dbReference type="PROSITE" id="PS00028">
    <property type="entry name" value="ZINC_FINGER_C2H2_1"/>
    <property type="match status" value="1"/>
</dbReference>
<reference key="1">
    <citation type="journal article" date="2006" name="DNA Seq.">
        <title>Cloning, characterization and tissue-specific expression of a cDNA encoding a novel EMBRYONIC FLOWER 2 gene (OsEMF2) in Oryza sativa.</title>
        <authorList>
            <person name="Li K."/>
            <person name="Yang J."/>
            <person name="Liu J."/>
            <person name="Du X."/>
            <person name="Wei C."/>
            <person name="Su W."/>
            <person name="He G."/>
            <person name="Zhang Q."/>
            <person name="Hong F."/>
            <person name="Qian X."/>
        </authorList>
    </citation>
    <scope>NUCLEOTIDE SEQUENCE [MRNA]</scope>
    <scope>TISSUE SPECIFICITY</scope>
    <source>
        <tissue>Leaf</tissue>
    </source>
</reference>
<reference key="2">
    <citation type="journal article" date="2002" name="Nature">
        <title>Sequence and analysis of rice chromosome 4.</title>
        <authorList>
            <person name="Feng Q."/>
            <person name="Zhang Y."/>
            <person name="Hao P."/>
            <person name="Wang S."/>
            <person name="Fu G."/>
            <person name="Huang Y."/>
            <person name="Li Y."/>
            <person name="Zhu J."/>
            <person name="Liu Y."/>
            <person name="Hu X."/>
            <person name="Jia P."/>
            <person name="Zhang Y."/>
            <person name="Zhao Q."/>
            <person name="Ying K."/>
            <person name="Yu S."/>
            <person name="Tang Y."/>
            <person name="Weng Q."/>
            <person name="Zhang L."/>
            <person name="Lu Y."/>
            <person name="Mu J."/>
            <person name="Lu Y."/>
            <person name="Zhang L.S."/>
            <person name="Yu Z."/>
            <person name="Fan D."/>
            <person name="Liu X."/>
            <person name="Lu T."/>
            <person name="Li C."/>
            <person name="Wu Y."/>
            <person name="Sun T."/>
            <person name="Lei H."/>
            <person name="Li T."/>
            <person name="Hu H."/>
            <person name="Guan J."/>
            <person name="Wu M."/>
            <person name="Zhang R."/>
            <person name="Zhou B."/>
            <person name="Chen Z."/>
            <person name="Chen L."/>
            <person name="Jin Z."/>
            <person name="Wang R."/>
            <person name="Yin H."/>
            <person name="Cai Z."/>
            <person name="Ren S."/>
            <person name="Lv G."/>
            <person name="Gu W."/>
            <person name="Zhu G."/>
            <person name="Tu Y."/>
            <person name="Jia J."/>
            <person name="Zhang Y."/>
            <person name="Chen J."/>
            <person name="Kang H."/>
            <person name="Chen X."/>
            <person name="Shao C."/>
            <person name="Sun Y."/>
            <person name="Hu Q."/>
            <person name="Zhang X."/>
            <person name="Zhang W."/>
            <person name="Wang L."/>
            <person name="Ding C."/>
            <person name="Sheng H."/>
            <person name="Gu J."/>
            <person name="Chen S."/>
            <person name="Ni L."/>
            <person name="Zhu F."/>
            <person name="Chen W."/>
            <person name="Lan L."/>
            <person name="Lai Y."/>
            <person name="Cheng Z."/>
            <person name="Gu M."/>
            <person name="Jiang J."/>
            <person name="Li J."/>
            <person name="Hong G."/>
            <person name="Xue Y."/>
            <person name="Han B."/>
        </authorList>
    </citation>
    <scope>NUCLEOTIDE SEQUENCE [LARGE SCALE GENOMIC DNA]</scope>
    <source>
        <strain>cv. Nipponbare</strain>
    </source>
</reference>
<reference key="3">
    <citation type="journal article" date="2005" name="Nature">
        <title>The map-based sequence of the rice genome.</title>
        <authorList>
            <consortium name="International rice genome sequencing project (IRGSP)"/>
        </authorList>
    </citation>
    <scope>NUCLEOTIDE SEQUENCE [LARGE SCALE GENOMIC DNA]</scope>
    <source>
        <strain>cv. Nipponbare</strain>
    </source>
</reference>
<reference key="4">
    <citation type="journal article" date="2008" name="Nucleic Acids Res.">
        <title>The rice annotation project database (RAP-DB): 2008 update.</title>
        <authorList>
            <consortium name="The rice annotation project (RAP)"/>
        </authorList>
    </citation>
    <scope>GENOME REANNOTATION</scope>
    <source>
        <strain>cv. Nipponbare</strain>
    </source>
</reference>
<reference key="5">
    <citation type="journal article" date="2013" name="Rice">
        <title>Improvement of the Oryza sativa Nipponbare reference genome using next generation sequence and optical map data.</title>
        <authorList>
            <person name="Kawahara Y."/>
            <person name="de la Bastide M."/>
            <person name="Hamilton J.P."/>
            <person name="Kanamori H."/>
            <person name="McCombie W.R."/>
            <person name="Ouyang S."/>
            <person name="Schwartz D.C."/>
            <person name="Tanaka T."/>
            <person name="Wu J."/>
            <person name="Zhou S."/>
            <person name="Childs K.L."/>
            <person name="Davidson R.M."/>
            <person name="Lin H."/>
            <person name="Quesada-Ocampo L."/>
            <person name="Vaillancourt B."/>
            <person name="Sakai H."/>
            <person name="Lee S.S."/>
            <person name="Kim J."/>
            <person name="Numa H."/>
            <person name="Itoh T."/>
            <person name="Buell C.R."/>
            <person name="Matsumoto T."/>
        </authorList>
    </citation>
    <scope>GENOME REANNOTATION</scope>
    <source>
        <strain>cv. Nipponbare</strain>
    </source>
</reference>
<reference key="6">
    <citation type="journal article" date="2005" name="PLoS Biol.">
        <title>The genomes of Oryza sativa: a history of duplications.</title>
        <authorList>
            <person name="Yu J."/>
            <person name="Wang J."/>
            <person name="Lin W."/>
            <person name="Li S."/>
            <person name="Li H."/>
            <person name="Zhou J."/>
            <person name="Ni P."/>
            <person name="Dong W."/>
            <person name="Hu S."/>
            <person name="Zeng C."/>
            <person name="Zhang J."/>
            <person name="Zhang Y."/>
            <person name="Li R."/>
            <person name="Xu Z."/>
            <person name="Li S."/>
            <person name="Li X."/>
            <person name="Zheng H."/>
            <person name="Cong L."/>
            <person name="Lin L."/>
            <person name="Yin J."/>
            <person name="Geng J."/>
            <person name="Li G."/>
            <person name="Shi J."/>
            <person name="Liu J."/>
            <person name="Lv H."/>
            <person name="Li J."/>
            <person name="Wang J."/>
            <person name="Deng Y."/>
            <person name="Ran L."/>
            <person name="Shi X."/>
            <person name="Wang X."/>
            <person name="Wu Q."/>
            <person name="Li C."/>
            <person name="Ren X."/>
            <person name="Wang J."/>
            <person name="Wang X."/>
            <person name="Li D."/>
            <person name="Liu D."/>
            <person name="Zhang X."/>
            <person name="Ji Z."/>
            <person name="Zhao W."/>
            <person name="Sun Y."/>
            <person name="Zhang Z."/>
            <person name="Bao J."/>
            <person name="Han Y."/>
            <person name="Dong L."/>
            <person name="Ji J."/>
            <person name="Chen P."/>
            <person name="Wu S."/>
            <person name="Liu J."/>
            <person name="Xiao Y."/>
            <person name="Bu D."/>
            <person name="Tan J."/>
            <person name="Yang L."/>
            <person name="Ye C."/>
            <person name="Zhang J."/>
            <person name="Xu J."/>
            <person name="Zhou Y."/>
            <person name="Yu Y."/>
            <person name="Zhang B."/>
            <person name="Zhuang S."/>
            <person name="Wei H."/>
            <person name="Liu B."/>
            <person name="Lei M."/>
            <person name="Yu H."/>
            <person name="Li Y."/>
            <person name="Xu H."/>
            <person name="Wei S."/>
            <person name="He X."/>
            <person name="Fang L."/>
            <person name="Zhang Z."/>
            <person name="Zhang Y."/>
            <person name="Huang X."/>
            <person name="Su Z."/>
            <person name="Tong W."/>
            <person name="Li J."/>
            <person name="Tong Z."/>
            <person name="Li S."/>
            <person name="Ye J."/>
            <person name="Wang L."/>
            <person name="Fang L."/>
            <person name="Lei T."/>
            <person name="Chen C.-S."/>
            <person name="Chen H.-C."/>
            <person name="Xu Z."/>
            <person name="Li H."/>
            <person name="Huang H."/>
            <person name="Zhang F."/>
            <person name="Xu H."/>
            <person name="Li N."/>
            <person name="Zhao C."/>
            <person name="Li S."/>
            <person name="Dong L."/>
            <person name="Huang Y."/>
            <person name="Li L."/>
            <person name="Xi Y."/>
            <person name="Qi Q."/>
            <person name="Li W."/>
            <person name="Zhang B."/>
            <person name="Hu W."/>
            <person name="Zhang Y."/>
            <person name="Tian X."/>
            <person name="Jiao Y."/>
            <person name="Liang X."/>
            <person name="Jin J."/>
            <person name="Gao L."/>
            <person name="Zheng W."/>
            <person name="Hao B."/>
            <person name="Liu S.-M."/>
            <person name="Wang W."/>
            <person name="Yuan L."/>
            <person name="Cao M."/>
            <person name="McDermott J."/>
            <person name="Samudrala R."/>
            <person name="Wang J."/>
            <person name="Wong G.K.-S."/>
            <person name="Yang H."/>
        </authorList>
    </citation>
    <scope>NUCLEOTIDE SEQUENCE [LARGE SCALE GENOMIC DNA]</scope>
    <source>
        <strain>cv. Nipponbare</strain>
    </source>
</reference>
<reference key="7">
    <citation type="journal article" date="2009" name="Mol. Plant">
        <title>Expression, imprinting, and evolution of rice homologs of the polycomb group genes.</title>
        <authorList>
            <person name="Luo M."/>
            <person name="Platten D."/>
            <person name="Chaudhury A."/>
            <person name="Peacock W.J."/>
            <person name="Dennis E.S."/>
        </authorList>
    </citation>
    <scope>TISSUE SPECIFICITY</scope>
</reference>
<comment type="function">
    <text evidence="1">Polycomb group (PcG) protein. PcG proteins act by forming multiprotein complexes, which are required to maintain the transcriptionally repressive state of homeotic genes throughout development. PcG proteins are not required to initiate repression, but to maintain it during later stages of development. They act via the methylation of histones, rendering chromatin heritably changed in its expressibility.</text>
</comment>
<comment type="subunit">
    <text evidence="1">Component of the polycomb repressive complex 2 (PRC2), which methylates 'Lys-27' residues of histone H3 (H3K27me3), leading to transcriptional repression of the affected target gene.</text>
</comment>
<comment type="tissue specificity">
    <text evidence="4 5">Widely expressed (PubMed:19825651). Highly expressed in shoot apical meristem and inflorescence meristem. Expressed in roots, leaves and immature seeds (PubMed:16753820).</text>
</comment>
<comment type="similarity">
    <text evidence="7">Belongs to the VEFS (VRN2-EMF2-FIS2-SU(Z)12) family.</text>
</comment>
<comment type="sequence caution" evidence="7">
    <conflict type="erroneous gene model prediction">
        <sequence resource="EMBL-CDS" id="CAE01874"/>
    </conflict>
</comment>
<comment type="sequence caution" evidence="7">
    <conflict type="erroneous gene model prediction">
        <sequence resource="EMBL-CDS" id="EEE60482"/>
    </conflict>
</comment>
<feature type="chain" id="PRO_0000444463" description="Polycomb group protein EMF2A">
    <location>
        <begin position="1"/>
        <end position="624"/>
    </location>
</feature>
<feature type="zinc finger region" description="C2H2-type" evidence="2">
    <location>
        <begin position="338"/>
        <end position="359"/>
    </location>
</feature>
<feature type="region of interest" description="Disordered" evidence="3">
    <location>
        <begin position="420"/>
        <end position="445"/>
    </location>
</feature>
<feature type="region of interest" description="VEFS-box" evidence="2">
    <location>
        <begin position="474"/>
        <end position="609"/>
    </location>
</feature>
<feature type="compositionally biased region" description="Acidic residues" evidence="3">
    <location>
        <begin position="432"/>
        <end position="445"/>
    </location>
</feature>
<feature type="sequence conflict" description="In Ref. 1; AAQ84239." evidence="7" ref="1">
    <original>N</original>
    <variation>S</variation>
    <location>
        <position position="477"/>
    </location>
</feature>
<feature type="sequence conflict" description="In Ref. 1; AAQ84239." evidence="7" ref="1">
    <original>R</original>
    <variation>G</variation>
    <location>
        <position position="618"/>
    </location>
</feature>
<keyword id="KW-0156">Chromatin regulator</keyword>
<keyword id="KW-0217">Developmental protein</keyword>
<keyword id="KW-0221">Differentiation</keyword>
<keyword id="KW-0479">Metal-binding</keyword>
<keyword id="KW-1185">Reference proteome</keyword>
<keyword id="KW-0804">Transcription</keyword>
<keyword id="KW-0805">Transcription regulation</keyword>
<keyword id="KW-0862">Zinc</keyword>
<keyword id="KW-0863">Zinc-finger</keyword>
<name>EMF2A_ORYSJ</name>
<gene>
    <name evidence="6" type="primary">EMF2A</name>
    <name evidence="8" type="ordered locus">Os04g0162100</name>
    <name evidence="7" type="ordered locus">LOC_Os04g08034</name>
    <name evidence="10" type="ORF">OsJ_13761</name>
    <name evidence="9" type="ORF">OSJNBb0028M18.7</name>
</gene>
<protein>
    <recommendedName>
        <fullName evidence="7">Polycomb group protein EMF2A</fullName>
        <shortName evidence="6">OsEMF2A</shortName>
    </recommendedName>
    <alternativeName>
        <fullName evidence="7">Polycomb group protein EMBRYONIC FLOWER 2B</fullName>
    </alternativeName>
</protein>
<proteinExistence type="evidence at transcript level"/>